<protein>
    <recommendedName>
        <fullName>Sucrose transport protein SUT5</fullName>
    </recommendedName>
    <alternativeName>
        <fullName>Sucrose permease 5</fullName>
    </alternativeName>
    <alternativeName>
        <fullName>Sucrose transporter 5</fullName>
        <shortName>OsSUT5</shortName>
    </alternativeName>
    <alternativeName>
        <fullName>Sucrose-proton symporter 5</fullName>
    </alternativeName>
</protein>
<feature type="chain" id="PRO_0000398194" description="Sucrose transport protein SUT5">
    <location>
        <begin position="1"/>
        <end position="535"/>
    </location>
</feature>
<feature type="topological domain" description="Cytoplasmic" evidence="2">
    <location>
        <begin position="1"/>
        <end position="53"/>
    </location>
</feature>
<feature type="transmembrane region" description="Helical" evidence="2">
    <location>
        <begin position="54"/>
        <end position="74"/>
    </location>
</feature>
<feature type="topological domain" description="Extracellular" evidence="2">
    <location>
        <begin position="75"/>
        <end position="87"/>
    </location>
</feature>
<feature type="transmembrane region" description="Helical" evidence="2">
    <location>
        <begin position="88"/>
        <end position="108"/>
    </location>
</feature>
<feature type="topological domain" description="Cytoplasmic" evidence="2">
    <location>
        <begin position="109"/>
        <end position="122"/>
    </location>
</feature>
<feature type="transmembrane region" description="Helical" evidence="2">
    <location>
        <begin position="123"/>
        <end position="143"/>
    </location>
</feature>
<feature type="topological domain" description="Extracellular" evidence="2">
    <location>
        <begin position="144"/>
        <end position="163"/>
    </location>
</feature>
<feature type="transmembrane region" description="Helical" evidence="2">
    <location>
        <begin position="164"/>
        <end position="184"/>
    </location>
</feature>
<feature type="topological domain" description="Cytoplasmic" evidence="2">
    <location>
        <begin position="185"/>
        <end position="203"/>
    </location>
</feature>
<feature type="transmembrane region" description="Helical" evidence="2">
    <location>
        <begin position="204"/>
        <end position="224"/>
    </location>
</feature>
<feature type="topological domain" description="Extracellular" evidence="2">
    <location>
        <begin position="225"/>
        <end position="249"/>
    </location>
</feature>
<feature type="transmembrane region" description="Helical" evidence="2">
    <location>
        <begin position="250"/>
        <end position="270"/>
    </location>
</feature>
<feature type="topological domain" description="Cytoplasmic" evidence="2">
    <location>
        <begin position="271"/>
        <end position="302"/>
    </location>
</feature>
<feature type="transmembrane region" description="Helical" evidence="2">
    <location>
        <begin position="303"/>
        <end position="323"/>
    </location>
</feature>
<feature type="topological domain" description="Extracellular" evidence="2">
    <location>
        <begin position="324"/>
        <end position="354"/>
    </location>
</feature>
<feature type="transmembrane region" description="Helical" evidence="2">
    <location>
        <begin position="355"/>
        <end position="375"/>
    </location>
</feature>
<feature type="topological domain" description="Cytoplasmic" evidence="2">
    <location>
        <begin position="376"/>
        <end position="384"/>
    </location>
</feature>
<feature type="transmembrane region" description="Helical" evidence="2">
    <location>
        <begin position="385"/>
        <end position="405"/>
    </location>
</feature>
<feature type="topological domain" description="Extracellular" evidence="2">
    <location>
        <begin position="406"/>
        <end position="429"/>
    </location>
</feature>
<feature type="transmembrane region" description="Helical" evidence="2">
    <location>
        <begin position="430"/>
        <end position="450"/>
    </location>
</feature>
<feature type="topological domain" description="Cytoplasmic" evidence="2">
    <location>
        <begin position="451"/>
        <end position="465"/>
    </location>
</feature>
<feature type="transmembrane region" description="Helical" evidence="2">
    <location>
        <begin position="466"/>
        <end position="486"/>
    </location>
</feature>
<feature type="topological domain" description="Extracellular" evidence="2">
    <location>
        <begin position="487"/>
        <end position="498"/>
    </location>
</feature>
<feature type="transmembrane region" description="Helical" evidence="2">
    <location>
        <begin position="499"/>
        <end position="519"/>
    </location>
</feature>
<feature type="topological domain" description="Cytoplasmic" evidence="2">
    <location>
        <begin position="520"/>
        <end position="535"/>
    </location>
</feature>
<name>SUT5_ORYSI</name>
<organism>
    <name type="scientific">Oryza sativa subsp. indica</name>
    <name type="common">Rice</name>
    <dbReference type="NCBI Taxonomy" id="39946"/>
    <lineage>
        <taxon>Eukaryota</taxon>
        <taxon>Viridiplantae</taxon>
        <taxon>Streptophyta</taxon>
        <taxon>Embryophyta</taxon>
        <taxon>Tracheophyta</taxon>
        <taxon>Spermatophyta</taxon>
        <taxon>Magnoliopsida</taxon>
        <taxon>Liliopsida</taxon>
        <taxon>Poales</taxon>
        <taxon>Poaceae</taxon>
        <taxon>BOP clade</taxon>
        <taxon>Oryzoideae</taxon>
        <taxon>Oryzeae</taxon>
        <taxon>Oryzinae</taxon>
        <taxon>Oryza</taxon>
        <taxon>Oryza sativa</taxon>
    </lineage>
</organism>
<evidence type="ECO:0000250" key="1"/>
<evidence type="ECO:0000255" key="2"/>
<evidence type="ECO:0000305" key="3"/>
<keyword id="KW-1003">Cell membrane</keyword>
<keyword id="KW-0472">Membrane</keyword>
<keyword id="KW-1185">Reference proteome</keyword>
<keyword id="KW-0762">Sugar transport</keyword>
<keyword id="KW-0769">Symport</keyword>
<keyword id="KW-0812">Transmembrane</keyword>
<keyword id="KW-1133">Transmembrane helix</keyword>
<keyword id="KW-0813">Transport</keyword>
<dbReference type="EMBL" id="CM000127">
    <property type="protein sequence ID" value="EAY86406.1"/>
    <property type="molecule type" value="Genomic_DNA"/>
</dbReference>
<dbReference type="SMR" id="A2X6E6"/>
<dbReference type="STRING" id="39946.A2X6E6"/>
<dbReference type="EnsemblPlants" id="BGIOSGA006190-TA">
    <property type="protein sequence ID" value="BGIOSGA006190-PA"/>
    <property type="gene ID" value="BGIOSGA006190"/>
</dbReference>
<dbReference type="Gramene" id="BGIOSGA006190-TA">
    <property type="protein sequence ID" value="BGIOSGA006190-PA"/>
    <property type="gene ID" value="BGIOSGA006190"/>
</dbReference>
<dbReference type="HOGENOM" id="CLU_025234_3_0_1"/>
<dbReference type="OMA" id="VSMRGYR"/>
<dbReference type="UniPathway" id="UPA00238"/>
<dbReference type="Proteomes" id="UP000007015">
    <property type="component" value="Chromosome 2"/>
</dbReference>
<dbReference type="GO" id="GO:0005886">
    <property type="term" value="C:plasma membrane"/>
    <property type="evidence" value="ECO:0007669"/>
    <property type="project" value="UniProtKB-SubCell"/>
</dbReference>
<dbReference type="GO" id="GO:0042951">
    <property type="term" value="F:arbutin transmembrane transporter activity"/>
    <property type="evidence" value="ECO:0007669"/>
    <property type="project" value="EnsemblPlants"/>
</dbReference>
<dbReference type="GO" id="GO:0005364">
    <property type="term" value="F:maltose:proton symporter activity"/>
    <property type="evidence" value="ECO:0007669"/>
    <property type="project" value="EnsemblPlants"/>
</dbReference>
<dbReference type="GO" id="GO:0042950">
    <property type="term" value="F:salicin transmembrane transporter activity"/>
    <property type="evidence" value="ECO:0007669"/>
    <property type="project" value="EnsemblPlants"/>
</dbReference>
<dbReference type="GO" id="GO:0008506">
    <property type="term" value="F:sucrose:proton symporter activity"/>
    <property type="evidence" value="ECO:0007669"/>
    <property type="project" value="EnsemblPlants"/>
</dbReference>
<dbReference type="GO" id="GO:0005985">
    <property type="term" value="P:sucrose metabolic process"/>
    <property type="evidence" value="ECO:0007669"/>
    <property type="project" value="UniProtKB-UniPathway"/>
</dbReference>
<dbReference type="CDD" id="cd17313">
    <property type="entry name" value="MFS_SLC45_SUC"/>
    <property type="match status" value="1"/>
</dbReference>
<dbReference type="FunFam" id="1.20.1250.20:FF:000366">
    <property type="entry name" value="Sucrose transport protein SUT5"/>
    <property type="match status" value="1"/>
</dbReference>
<dbReference type="FunFam" id="1.20.1250.20:FF:000182">
    <property type="entry name" value="Sucrose transporter SUC2"/>
    <property type="match status" value="1"/>
</dbReference>
<dbReference type="Gene3D" id="1.20.1250.20">
    <property type="entry name" value="MFS general substrate transporter like domains"/>
    <property type="match status" value="2"/>
</dbReference>
<dbReference type="InterPro" id="IPR011701">
    <property type="entry name" value="MFS"/>
</dbReference>
<dbReference type="InterPro" id="IPR036259">
    <property type="entry name" value="MFS_trans_sf"/>
</dbReference>
<dbReference type="InterPro" id="IPR005989">
    <property type="entry name" value="Suc_symporter_pln"/>
</dbReference>
<dbReference type="NCBIfam" id="TIGR01301">
    <property type="entry name" value="GPH_sucrose"/>
    <property type="match status" value="1"/>
</dbReference>
<dbReference type="PANTHER" id="PTHR19432:SF43">
    <property type="entry name" value="SUCROSE TRANSPORT PROTEIN SUT5"/>
    <property type="match status" value="1"/>
</dbReference>
<dbReference type="PANTHER" id="PTHR19432">
    <property type="entry name" value="SUGAR TRANSPORTER"/>
    <property type="match status" value="1"/>
</dbReference>
<dbReference type="Pfam" id="PF07690">
    <property type="entry name" value="MFS_1"/>
    <property type="match status" value="1"/>
</dbReference>
<dbReference type="SUPFAM" id="SSF103473">
    <property type="entry name" value="MFS general substrate transporter"/>
    <property type="match status" value="1"/>
</dbReference>
<comment type="function">
    <text evidence="1">Responsible for the transport of sucrose into the cell, with the concomitant uptake of protons (symport system). May also transport other glucosides (By similarity).</text>
</comment>
<comment type="pathway">
    <text>Glycan biosynthesis; sucrose metabolism.</text>
</comment>
<comment type="subunit">
    <text evidence="1">Homodimer.</text>
</comment>
<comment type="subcellular location">
    <subcellularLocation>
        <location evidence="3">Cell membrane</location>
        <topology evidence="3">Multi-pass membrane protein</topology>
    </subcellularLocation>
</comment>
<comment type="similarity">
    <text evidence="3">Belongs to the glycoside-pentoside-hexuronide (GPH) cation symporter transporter (TC 2.A.2.4) family.</text>
</comment>
<proteinExistence type="inferred from homology"/>
<sequence length="535" mass="56993">MEEGRRGDREAKSAAGWTALSTTKTTLEEKRRLQANGSVGGDAGTSGFRRIVRLFFACMVAGGIQYGWALQLSLLSPYSQTLGISHSYVSLTWICGPIAGFVVQPIVGYYSDRCTMKMGRRRPFILVGCLIICISVMIIGFSADIGRHLGDTKEHCSTYTGPRWSAAMVYIVGFWFLDFANNTVQGPARAMMADLSAGHHGPNVGQSIFSLWMAIGSVLGYLSGANGKWHEWFPWLKTAACCDACANLKGAFFTAVLLIVVSMTVTMYLADEMPLDKQDVDTSGGGGCAVFVDLFKSLRNLPPAMFKVLAVTAVTWLSWFPFIQYNTDWMGREIYHGEPQGTAAKADVYDAGVREGAMGLLFCSVALGVTSFVIPKLCRRLTSKVVWSISNFLVFALMAVMVAVGMVSMRGYRPSLAAGLTGPDPTLKAVALVVFALIGIPQAVLFSVPWAVASEVTAEEGGGQGLAIGVLNIAIVVPQLVIALTAGPIDGAFNKGNTPAFGIGGAFAFICGVLALIWLPKTRGVSNAAVVAGGH</sequence>
<reference key="1">
    <citation type="journal article" date="2005" name="PLoS Biol.">
        <title>The genomes of Oryza sativa: a history of duplications.</title>
        <authorList>
            <person name="Yu J."/>
            <person name="Wang J."/>
            <person name="Lin W."/>
            <person name="Li S."/>
            <person name="Li H."/>
            <person name="Zhou J."/>
            <person name="Ni P."/>
            <person name="Dong W."/>
            <person name="Hu S."/>
            <person name="Zeng C."/>
            <person name="Zhang J."/>
            <person name="Zhang Y."/>
            <person name="Li R."/>
            <person name="Xu Z."/>
            <person name="Li S."/>
            <person name="Li X."/>
            <person name="Zheng H."/>
            <person name="Cong L."/>
            <person name="Lin L."/>
            <person name="Yin J."/>
            <person name="Geng J."/>
            <person name="Li G."/>
            <person name="Shi J."/>
            <person name="Liu J."/>
            <person name="Lv H."/>
            <person name="Li J."/>
            <person name="Wang J."/>
            <person name="Deng Y."/>
            <person name="Ran L."/>
            <person name="Shi X."/>
            <person name="Wang X."/>
            <person name="Wu Q."/>
            <person name="Li C."/>
            <person name="Ren X."/>
            <person name="Wang J."/>
            <person name="Wang X."/>
            <person name="Li D."/>
            <person name="Liu D."/>
            <person name="Zhang X."/>
            <person name="Ji Z."/>
            <person name="Zhao W."/>
            <person name="Sun Y."/>
            <person name="Zhang Z."/>
            <person name="Bao J."/>
            <person name="Han Y."/>
            <person name="Dong L."/>
            <person name="Ji J."/>
            <person name="Chen P."/>
            <person name="Wu S."/>
            <person name="Liu J."/>
            <person name="Xiao Y."/>
            <person name="Bu D."/>
            <person name="Tan J."/>
            <person name="Yang L."/>
            <person name="Ye C."/>
            <person name="Zhang J."/>
            <person name="Xu J."/>
            <person name="Zhou Y."/>
            <person name="Yu Y."/>
            <person name="Zhang B."/>
            <person name="Zhuang S."/>
            <person name="Wei H."/>
            <person name="Liu B."/>
            <person name="Lei M."/>
            <person name="Yu H."/>
            <person name="Li Y."/>
            <person name="Xu H."/>
            <person name="Wei S."/>
            <person name="He X."/>
            <person name="Fang L."/>
            <person name="Zhang Z."/>
            <person name="Zhang Y."/>
            <person name="Huang X."/>
            <person name="Su Z."/>
            <person name="Tong W."/>
            <person name="Li J."/>
            <person name="Tong Z."/>
            <person name="Li S."/>
            <person name="Ye J."/>
            <person name="Wang L."/>
            <person name="Fang L."/>
            <person name="Lei T."/>
            <person name="Chen C.-S."/>
            <person name="Chen H.-C."/>
            <person name="Xu Z."/>
            <person name="Li H."/>
            <person name="Huang H."/>
            <person name="Zhang F."/>
            <person name="Xu H."/>
            <person name="Li N."/>
            <person name="Zhao C."/>
            <person name="Li S."/>
            <person name="Dong L."/>
            <person name="Huang Y."/>
            <person name="Li L."/>
            <person name="Xi Y."/>
            <person name="Qi Q."/>
            <person name="Li W."/>
            <person name="Zhang B."/>
            <person name="Hu W."/>
            <person name="Zhang Y."/>
            <person name="Tian X."/>
            <person name="Jiao Y."/>
            <person name="Liang X."/>
            <person name="Jin J."/>
            <person name="Gao L."/>
            <person name="Zheng W."/>
            <person name="Hao B."/>
            <person name="Liu S.-M."/>
            <person name="Wang W."/>
            <person name="Yuan L."/>
            <person name="Cao M."/>
            <person name="McDermott J."/>
            <person name="Samudrala R."/>
            <person name="Wang J."/>
            <person name="Wong G.K.-S."/>
            <person name="Yang H."/>
        </authorList>
    </citation>
    <scope>NUCLEOTIDE SEQUENCE [LARGE SCALE GENOMIC DNA]</scope>
    <source>
        <strain>cv. 93-11</strain>
    </source>
</reference>
<gene>
    <name type="primary">SUT5</name>
    <name type="ORF">OsI_07784</name>
</gene>
<accession>A2X6E6</accession>